<dbReference type="EMBL" id="AF222894">
    <property type="protein sequence ID" value="AAF30760.1"/>
    <property type="molecule type" value="Genomic_DNA"/>
</dbReference>
<dbReference type="RefSeq" id="WP_006688492.1">
    <property type="nucleotide sequence ID" value="NC_002162.1"/>
</dbReference>
<dbReference type="SMR" id="Q9PQE0"/>
<dbReference type="STRING" id="273119.UU351"/>
<dbReference type="EnsemblBacteria" id="AAF30760">
    <property type="protein sequence ID" value="AAF30760"/>
    <property type="gene ID" value="UU351"/>
</dbReference>
<dbReference type="GeneID" id="29672425"/>
<dbReference type="KEGG" id="uur:UU351"/>
<dbReference type="eggNOG" id="COG0327">
    <property type="taxonomic scope" value="Bacteria"/>
</dbReference>
<dbReference type="HOGENOM" id="CLU_037423_2_1_14"/>
<dbReference type="OrthoDB" id="9792792at2"/>
<dbReference type="Proteomes" id="UP000000423">
    <property type="component" value="Chromosome"/>
</dbReference>
<dbReference type="GO" id="GO:0005737">
    <property type="term" value="C:cytoplasm"/>
    <property type="evidence" value="ECO:0007669"/>
    <property type="project" value="TreeGrafter"/>
</dbReference>
<dbReference type="GO" id="GO:0046872">
    <property type="term" value="F:metal ion binding"/>
    <property type="evidence" value="ECO:0007669"/>
    <property type="project" value="UniProtKB-KW"/>
</dbReference>
<dbReference type="FunFam" id="3.40.1390.30:FF:000001">
    <property type="entry name" value="GTP cyclohydrolase 1 type 2"/>
    <property type="match status" value="1"/>
</dbReference>
<dbReference type="Gene3D" id="3.40.1390.30">
    <property type="entry name" value="NIF3 (NGG1p interacting factor 3)-like"/>
    <property type="match status" value="2"/>
</dbReference>
<dbReference type="InterPro" id="IPR002678">
    <property type="entry name" value="DUF34/NIF3"/>
</dbReference>
<dbReference type="InterPro" id="IPR036069">
    <property type="entry name" value="DUF34/NIF3_sf"/>
</dbReference>
<dbReference type="PANTHER" id="PTHR13799:SF14">
    <property type="entry name" value="GTP CYCLOHYDROLASE 1 TYPE 2 HOMOLOG"/>
    <property type="match status" value="1"/>
</dbReference>
<dbReference type="PANTHER" id="PTHR13799">
    <property type="entry name" value="NGG1 INTERACTING FACTOR 3"/>
    <property type="match status" value="1"/>
</dbReference>
<dbReference type="Pfam" id="PF01784">
    <property type="entry name" value="DUF34_NIF3"/>
    <property type="match status" value="1"/>
</dbReference>
<dbReference type="SUPFAM" id="SSF102705">
    <property type="entry name" value="NIF3 (NGG1p interacting factor 3)-like"/>
    <property type="match status" value="1"/>
</dbReference>
<sequence>MKKMDIKAQDILNFLTKKYDLSKAEAWDKNGLFFDEQQTINNVQIALDITDDVVNDAILNNANLIISHHPLFTNQDSNDEVNYFVNIDLIEKIKKNKISLIHLHTAFDASANGMSMQMAKRLGLLNLKQDEQNPYLVVGELKLGVSVDYISRIIKQKFLSPIIKYNNVFRLETNLKKIGIIGGSGYKFADDAFNRYQLDMLITSDLKYHNWLDAQAKKQNIIDMNHLSESIFIDVIYDELTKFYGNDANLNKSLSIIKINYI</sequence>
<comment type="subunit">
    <text evidence="1">Homohexamer.</text>
</comment>
<comment type="similarity">
    <text evidence="2">Belongs to the GTP cyclohydrolase I type 2/NIF3 family.</text>
</comment>
<proteinExistence type="inferred from homology"/>
<gene>
    <name type="ordered locus">UU351</name>
</gene>
<name>GCH1L_UREPA</name>
<evidence type="ECO:0000250" key="1">
    <source>
        <dbReference type="UniProtKB" id="P0AFP6"/>
    </source>
</evidence>
<evidence type="ECO:0000305" key="2"/>
<reference key="1">
    <citation type="journal article" date="2000" name="Nature">
        <title>The complete sequence of the mucosal pathogen Ureaplasma urealyticum.</title>
        <authorList>
            <person name="Glass J.I."/>
            <person name="Lefkowitz E.J."/>
            <person name="Glass J.S."/>
            <person name="Heiner C.R."/>
            <person name="Chen E.Y."/>
            <person name="Cassell G.H."/>
        </authorList>
    </citation>
    <scope>NUCLEOTIDE SEQUENCE [LARGE SCALE GENOMIC DNA]</scope>
    <source>
        <strain>ATCC 700970</strain>
    </source>
</reference>
<accession>Q9PQE0</accession>
<organism>
    <name type="scientific">Ureaplasma parvum serovar 3 (strain ATCC 700970)</name>
    <dbReference type="NCBI Taxonomy" id="273119"/>
    <lineage>
        <taxon>Bacteria</taxon>
        <taxon>Bacillati</taxon>
        <taxon>Mycoplasmatota</taxon>
        <taxon>Mycoplasmoidales</taxon>
        <taxon>Mycoplasmoidaceae</taxon>
        <taxon>Ureaplasma</taxon>
    </lineage>
</organism>
<protein>
    <recommendedName>
        <fullName>GTP cyclohydrolase 1 type 2 homolog</fullName>
    </recommendedName>
</protein>
<keyword id="KW-0479">Metal-binding</keyword>
<keyword id="KW-1185">Reference proteome</keyword>
<feature type="chain" id="PRO_0000147342" description="GTP cyclohydrolase 1 type 2 homolog">
    <location>
        <begin position="1"/>
        <end position="262"/>
    </location>
</feature>
<feature type="binding site" evidence="1">
    <location>
        <position position="68"/>
    </location>
    <ligand>
        <name>a divalent metal cation</name>
        <dbReference type="ChEBI" id="CHEBI:60240"/>
        <label>1</label>
    </ligand>
</feature>
<feature type="binding site" evidence="1">
    <location>
        <position position="69"/>
    </location>
    <ligand>
        <name>a divalent metal cation</name>
        <dbReference type="ChEBI" id="CHEBI:60240"/>
        <label>2</label>
    </ligand>
</feature>
<feature type="binding site" evidence="1">
    <location>
        <position position="108"/>
    </location>
    <ligand>
        <name>a divalent metal cation</name>
        <dbReference type="ChEBI" id="CHEBI:60240"/>
        <label>1</label>
    </ligand>
</feature>
<feature type="binding site" evidence="1">
    <location>
        <position position="226"/>
    </location>
    <ligand>
        <name>a divalent metal cation</name>
        <dbReference type="ChEBI" id="CHEBI:60240"/>
        <label>2</label>
    </ligand>
</feature>
<feature type="binding site" evidence="1">
    <location>
        <position position="229"/>
    </location>
    <ligand>
        <name>a divalent metal cation</name>
        <dbReference type="ChEBI" id="CHEBI:60240"/>
        <label>1</label>
    </ligand>
</feature>
<feature type="binding site" evidence="1">
    <location>
        <position position="229"/>
    </location>
    <ligand>
        <name>a divalent metal cation</name>
        <dbReference type="ChEBI" id="CHEBI:60240"/>
        <label>2</label>
    </ligand>
</feature>